<reference key="1">
    <citation type="journal article" date="1986" name="EMBO J.">
        <title>The 'light' and 'medium' subunits of the photosynthetic reaction centre from Rhodopseudomonas viridis: isolation of the genes, nucleotide and amino acid sequence.</title>
        <authorList>
            <person name="Michel H."/>
            <person name="Weyer K.A."/>
            <person name="Gruenberg H."/>
            <person name="Dunger I."/>
            <person name="Oesterhelt D."/>
            <person name="Lottspeich F."/>
        </authorList>
    </citation>
    <scope>NUCLEOTIDE SEQUENCE [GENOMIC DNA]</scope>
    <source>
        <strain>ATCC 19567 / DSM 133 / F</strain>
    </source>
</reference>
<reference key="2">
    <citation type="journal article" date="1985" name="Nature">
        <title>Structure of the protein subunits in the photosynthetic reaction centre of Rhodopseudomonas viridis at 3-A resolution.</title>
        <authorList>
            <person name="Deisenhofer J."/>
            <person name="Epp O."/>
            <person name="Miki K."/>
            <person name="Huber R."/>
            <person name="Michel H."/>
        </authorList>
    </citation>
    <scope>X-RAY CRYSTALLOGRAPHY (3 ANGSTROMS)</scope>
</reference>
<reference key="3">
    <citation type="journal article" date="1984" name="J. Mol. Biol.">
        <title>X-ray structure analysis of a membrane protein complex. Electron density map at 3-A resolution and a model of the chromophores of the photosynthetic reaction center from Rhodopseudomonas viridis.</title>
        <authorList>
            <person name="Deisenhofer J."/>
            <person name="Epp O."/>
            <person name="Miki K."/>
            <person name="Huber R."/>
            <person name="Michel H."/>
        </authorList>
    </citation>
    <scope>X-RAY CRYSTALLOGRAPHY (3 ANGSTROMS)</scope>
</reference>
<reference key="4">
    <citation type="journal article" date="1997" name="Structure">
        <title>The coupling of light-induced electron transfer and proton uptake as derived from crystal structures of reaction centres from Rhodopseudomonas viridis modified at the binding site of the secondary quinone, QB.</title>
        <authorList>
            <person name="Lancaster C.R.D."/>
            <person name="Michel H."/>
        </authorList>
    </citation>
    <scope>X-RAY CRYSTALLOGRAPHY (2.45 ANGSTROMS)</scope>
    <source>
        <strain>ATCC 19567 / DSM 133 / F</strain>
    </source>
</reference>
<reference key="5">
    <citation type="journal article" date="1999" name="J. Mol. Biol.">
        <title>Refined crystal structures of reaction centres from Rhodopseudomonas viridis in complexes with the herbicide atrazine and two chiral atrazine derivatives also lead to a new model of the bound carotenoid.</title>
        <authorList>
            <person name="Lancaster C.R.D."/>
            <person name="Michel H."/>
        </authorList>
    </citation>
    <scope>X-RAY CRYSTALLOGRAPHY (2.35 ANGSTROMS)</scope>
    <source>
        <strain>ATCC 19567 / DSM 133 / F</strain>
    </source>
</reference>
<reference key="6">
    <citation type="journal article" date="1989" name="EMBO J.">
        <title>Nobel lecture. The photosynthetic reaction centre from the purple bacterium Rhodopseudomonas viridis.</title>
        <authorList>
            <person name="Deisenhofer J."/>
            <person name="Michel H."/>
        </authorList>
    </citation>
    <scope>TOPOLOGY</scope>
</reference>
<accession>P06009</accession>
<proteinExistence type="evidence at protein level"/>
<organism>
    <name type="scientific">Blastochloris viridis</name>
    <name type="common">Rhodopseudomonas viridis</name>
    <dbReference type="NCBI Taxonomy" id="1079"/>
    <lineage>
        <taxon>Bacteria</taxon>
        <taxon>Pseudomonadati</taxon>
        <taxon>Pseudomonadota</taxon>
        <taxon>Alphaproteobacteria</taxon>
        <taxon>Hyphomicrobiales</taxon>
        <taxon>Blastochloridaceae</taxon>
        <taxon>Blastochloris</taxon>
    </lineage>
</organism>
<dbReference type="EMBL" id="X03915">
    <property type="protein sequence ID" value="CAA27550.1"/>
    <property type="molecule type" value="Genomic_DNA"/>
</dbReference>
<dbReference type="PIR" id="A25102">
    <property type="entry name" value="A25102"/>
</dbReference>
<dbReference type="RefSeq" id="WP_055036366.1">
    <property type="nucleotide sequence ID" value="NZ_AP014854.2"/>
</dbReference>
<dbReference type="PDB" id="1DXR">
    <property type="method" value="X-ray"/>
    <property type="resolution" value="2.00 A"/>
    <property type="chains" value="L=2-274"/>
</dbReference>
<dbReference type="PDB" id="1PRC">
    <property type="method" value="X-ray"/>
    <property type="resolution" value="2.30 A"/>
    <property type="chains" value="L=2-274"/>
</dbReference>
<dbReference type="PDB" id="1R2C">
    <property type="method" value="X-ray"/>
    <property type="resolution" value="2.86 A"/>
    <property type="chains" value="L=2-274"/>
</dbReference>
<dbReference type="PDB" id="1VRN">
    <property type="method" value="X-ray"/>
    <property type="resolution" value="2.20 A"/>
    <property type="chains" value="L=2-274"/>
</dbReference>
<dbReference type="PDB" id="2I5N">
    <property type="method" value="X-ray"/>
    <property type="resolution" value="1.96 A"/>
    <property type="chains" value="L=2-274"/>
</dbReference>
<dbReference type="PDB" id="2JBL">
    <property type="method" value="X-ray"/>
    <property type="resolution" value="2.40 A"/>
    <property type="chains" value="L=2-274"/>
</dbReference>
<dbReference type="PDB" id="2PRC">
    <property type="method" value="X-ray"/>
    <property type="resolution" value="2.45 A"/>
    <property type="chains" value="L=2-274"/>
</dbReference>
<dbReference type="PDB" id="2WJM">
    <property type="method" value="X-ray"/>
    <property type="resolution" value="1.95 A"/>
    <property type="chains" value="L=1-274"/>
</dbReference>
<dbReference type="PDB" id="2WJN">
    <property type="method" value="X-ray"/>
    <property type="resolution" value="1.86 A"/>
    <property type="chains" value="L=1-274"/>
</dbReference>
<dbReference type="PDB" id="2X5U">
    <property type="method" value="X-ray"/>
    <property type="resolution" value="3.00 A"/>
    <property type="chains" value="L=1-274"/>
</dbReference>
<dbReference type="PDB" id="2X5V">
    <property type="method" value="X-ray"/>
    <property type="resolution" value="3.00 A"/>
    <property type="chains" value="L=1-274"/>
</dbReference>
<dbReference type="PDB" id="3D38">
    <property type="method" value="X-ray"/>
    <property type="resolution" value="3.21 A"/>
    <property type="chains" value="L=2-274"/>
</dbReference>
<dbReference type="PDB" id="3G7F">
    <property type="method" value="X-ray"/>
    <property type="resolution" value="2.50 A"/>
    <property type="chains" value="L=2-274"/>
</dbReference>
<dbReference type="PDB" id="3PRC">
    <property type="method" value="X-ray"/>
    <property type="resolution" value="2.40 A"/>
    <property type="chains" value="L=2-274"/>
</dbReference>
<dbReference type="PDB" id="3T6D">
    <property type="method" value="X-ray"/>
    <property type="resolution" value="1.95 A"/>
    <property type="chains" value="L=2-274"/>
</dbReference>
<dbReference type="PDB" id="3T6E">
    <property type="method" value="X-ray"/>
    <property type="resolution" value="1.92 A"/>
    <property type="chains" value="L=2-274"/>
</dbReference>
<dbReference type="PDB" id="4AC5">
    <property type="method" value="X-ray"/>
    <property type="resolution" value="8.20 A"/>
    <property type="chains" value="L=1-274"/>
</dbReference>
<dbReference type="PDB" id="4CAS">
    <property type="method" value="X-ray"/>
    <property type="resolution" value="3.50 A"/>
    <property type="chains" value="B=1-274"/>
</dbReference>
<dbReference type="PDB" id="5M7J">
    <property type="method" value="X-ray"/>
    <property type="resolution" value="3.50 A"/>
    <property type="chains" value="B=1-274"/>
</dbReference>
<dbReference type="PDB" id="5M7K">
    <property type="method" value="X-ray"/>
    <property type="resolution" value="3.50 A"/>
    <property type="chains" value="B=1-274"/>
</dbReference>
<dbReference type="PDB" id="5M7L">
    <property type="method" value="X-ray"/>
    <property type="resolution" value="3.60 A"/>
    <property type="chains" value="B=1-274"/>
</dbReference>
<dbReference type="PDB" id="5NJ4">
    <property type="method" value="X-ray"/>
    <property type="resolution" value="2.40 A"/>
    <property type="chains" value="L=2-274"/>
</dbReference>
<dbReference type="PDB" id="5O4C">
    <property type="method" value="X-ray"/>
    <property type="resolution" value="2.80 A"/>
    <property type="chains" value="L=2-274"/>
</dbReference>
<dbReference type="PDB" id="5O64">
    <property type="method" value="X-ray"/>
    <property type="resolution" value="3.30 A"/>
    <property type="chains" value="L=2-274"/>
</dbReference>
<dbReference type="PDB" id="5PRC">
    <property type="method" value="X-ray"/>
    <property type="resolution" value="2.35 A"/>
    <property type="chains" value="L=2-274"/>
</dbReference>
<dbReference type="PDB" id="6ET5">
    <property type="method" value="EM"/>
    <property type="resolution" value="3.00 A"/>
    <property type="chains" value="L=1-274"/>
</dbReference>
<dbReference type="PDB" id="6PRC">
    <property type="method" value="X-ray"/>
    <property type="resolution" value="2.30 A"/>
    <property type="chains" value="L=2-274"/>
</dbReference>
<dbReference type="PDB" id="6ZHW">
    <property type="method" value="X-ray"/>
    <property type="resolution" value="2.80 A"/>
    <property type="chains" value="L=2-274"/>
</dbReference>
<dbReference type="PDB" id="6ZI4">
    <property type="method" value="X-ray"/>
    <property type="resolution" value="2.80 A"/>
    <property type="chains" value="L=2-274"/>
</dbReference>
<dbReference type="PDB" id="6ZI5">
    <property type="method" value="X-ray"/>
    <property type="resolution" value="2.80 A"/>
    <property type="chains" value="L=2-274"/>
</dbReference>
<dbReference type="PDB" id="6ZI6">
    <property type="method" value="X-ray"/>
    <property type="resolution" value="2.80 A"/>
    <property type="chains" value="L=2-274"/>
</dbReference>
<dbReference type="PDB" id="6ZI9">
    <property type="method" value="X-ray"/>
    <property type="resolution" value="2.80 A"/>
    <property type="chains" value="L=2-274"/>
</dbReference>
<dbReference type="PDB" id="6ZIA">
    <property type="method" value="X-ray"/>
    <property type="resolution" value="2.80 A"/>
    <property type="chains" value="L=2-274"/>
</dbReference>
<dbReference type="PDB" id="6ZID">
    <property type="method" value="X-ray"/>
    <property type="resolution" value="2.80 A"/>
    <property type="chains" value="L=2-274"/>
</dbReference>
<dbReference type="PDB" id="7PRC">
    <property type="method" value="X-ray"/>
    <property type="resolution" value="2.65 A"/>
    <property type="chains" value="L=2-274"/>
</dbReference>
<dbReference type="PDB" id="7Q7P">
    <property type="method" value="X-ray"/>
    <property type="resolution" value="2.40 A"/>
    <property type="chains" value="LLL=2-274"/>
</dbReference>
<dbReference type="PDB" id="7Q7Q">
    <property type="method" value="X-ray"/>
    <property type="resolution" value="2.25 A"/>
    <property type="chains" value="LLL=2-274"/>
</dbReference>
<dbReference type="PDBsum" id="1DXR"/>
<dbReference type="PDBsum" id="1PRC"/>
<dbReference type="PDBsum" id="1R2C"/>
<dbReference type="PDBsum" id="1VRN"/>
<dbReference type="PDBsum" id="2I5N"/>
<dbReference type="PDBsum" id="2JBL"/>
<dbReference type="PDBsum" id="2PRC"/>
<dbReference type="PDBsum" id="2WJM"/>
<dbReference type="PDBsum" id="2WJN"/>
<dbReference type="PDBsum" id="2X5U"/>
<dbReference type="PDBsum" id="2X5V"/>
<dbReference type="PDBsum" id="3D38"/>
<dbReference type="PDBsum" id="3G7F"/>
<dbReference type="PDBsum" id="3PRC"/>
<dbReference type="PDBsum" id="3T6D"/>
<dbReference type="PDBsum" id="3T6E"/>
<dbReference type="PDBsum" id="4AC5"/>
<dbReference type="PDBsum" id="4CAS"/>
<dbReference type="PDBsum" id="5M7J"/>
<dbReference type="PDBsum" id="5M7K"/>
<dbReference type="PDBsum" id="5M7L"/>
<dbReference type="PDBsum" id="5NJ4"/>
<dbReference type="PDBsum" id="5O4C"/>
<dbReference type="PDBsum" id="5O64"/>
<dbReference type="PDBsum" id="5PRC"/>
<dbReference type="PDBsum" id="6ET5"/>
<dbReference type="PDBsum" id="6PRC"/>
<dbReference type="PDBsum" id="6ZHW"/>
<dbReference type="PDBsum" id="6ZI4"/>
<dbReference type="PDBsum" id="6ZI5"/>
<dbReference type="PDBsum" id="6ZI6"/>
<dbReference type="PDBsum" id="6ZI9"/>
<dbReference type="PDBsum" id="6ZIA"/>
<dbReference type="PDBsum" id="6ZID"/>
<dbReference type="PDBsum" id="7PRC"/>
<dbReference type="PDBsum" id="7Q7P"/>
<dbReference type="PDBsum" id="7Q7Q"/>
<dbReference type="EMDB" id="EMD-3951"/>
<dbReference type="SMR" id="P06009"/>
<dbReference type="IntAct" id="P06009">
    <property type="interactions" value="1"/>
</dbReference>
<dbReference type="STRING" id="1079.BVIR_604"/>
<dbReference type="DrugBank" id="DB07552">
    <property type="generic name" value="(2R)-2-{[4-chloro-6-(ethylamino)-1,3,5-triazin-2-yl]amino}-2-methylbutanenitrile"/>
</dbReference>
<dbReference type="DrugBank" id="DB07551">
    <property type="generic name" value="(2S)-2-{[4-chloro-6-(ethylamino)-1,3,5-triazin-2-yl]amino}-2-methylbutanenitrile"/>
</dbReference>
<dbReference type="DrugBank" id="DB07392">
    <property type="generic name" value="Atrazine"/>
</dbReference>
<dbReference type="DrugBank" id="DB04147">
    <property type="generic name" value="Dodecyldimethylamine N-oxide"/>
</dbReference>
<dbReference type="DrugBank" id="DB04464">
    <property type="generic name" value="N-Formylmethionine"/>
</dbReference>
<dbReference type="DrugBank" id="DB08215">
    <property type="generic name" value="Terbutryn"/>
</dbReference>
<dbReference type="DrugBank" id="DB08689">
    <property type="generic name" value="Ubiquinone Q1"/>
</dbReference>
<dbReference type="DrugBank" id="DB08690">
    <property type="generic name" value="Ubiquinone Q2"/>
</dbReference>
<dbReference type="OrthoDB" id="8555181at2"/>
<dbReference type="EvolutionaryTrace" id="P06009"/>
<dbReference type="GO" id="GO:0030077">
    <property type="term" value="C:plasma membrane light-harvesting complex"/>
    <property type="evidence" value="ECO:0007669"/>
    <property type="project" value="InterPro"/>
</dbReference>
<dbReference type="GO" id="GO:0042717">
    <property type="term" value="C:plasma membrane-derived chromatophore membrane"/>
    <property type="evidence" value="ECO:0007669"/>
    <property type="project" value="UniProtKB-SubCell"/>
</dbReference>
<dbReference type="GO" id="GO:0042314">
    <property type="term" value="F:bacteriochlorophyll binding"/>
    <property type="evidence" value="ECO:0007669"/>
    <property type="project" value="UniProtKB-KW"/>
</dbReference>
<dbReference type="GO" id="GO:0045156">
    <property type="term" value="F:electron transporter, transferring electrons within the cyclic electron transport pathway of photosynthesis activity"/>
    <property type="evidence" value="ECO:0007669"/>
    <property type="project" value="InterPro"/>
</dbReference>
<dbReference type="GO" id="GO:0046872">
    <property type="term" value="F:metal ion binding"/>
    <property type="evidence" value="ECO:0007669"/>
    <property type="project" value="UniProtKB-KW"/>
</dbReference>
<dbReference type="GO" id="GO:0009772">
    <property type="term" value="P:photosynthetic electron transport in photosystem II"/>
    <property type="evidence" value="ECO:0007669"/>
    <property type="project" value="InterPro"/>
</dbReference>
<dbReference type="CDD" id="cd09290">
    <property type="entry name" value="Photo-RC_L"/>
    <property type="match status" value="1"/>
</dbReference>
<dbReference type="Gene3D" id="1.20.85.10">
    <property type="entry name" value="Photosystem II protein D1-like"/>
    <property type="match status" value="2"/>
</dbReference>
<dbReference type="InterPro" id="IPR036854">
    <property type="entry name" value="Photo_II_D1/D2_sf"/>
</dbReference>
<dbReference type="InterPro" id="IPR005871">
    <property type="entry name" value="Photo_RC_L"/>
</dbReference>
<dbReference type="InterPro" id="IPR000484">
    <property type="entry name" value="Photo_RC_L/M"/>
</dbReference>
<dbReference type="InterPro" id="IPR055265">
    <property type="entry name" value="Photo_RC_L/M_CS"/>
</dbReference>
<dbReference type="NCBIfam" id="TIGR01157">
    <property type="entry name" value="pufL"/>
    <property type="match status" value="1"/>
</dbReference>
<dbReference type="Pfam" id="PF00124">
    <property type="entry name" value="Photo_RC"/>
    <property type="match status" value="1"/>
</dbReference>
<dbReference type="PRINTS" id="PR00256">
    <property type="entry name" value="REACTNCENTRE"/>
</dbReference>
<dbReference type="SUPFAM" id="SSF81483">
    <property type="entry name" value="Bacterial photosystem II reaction centre, L and M subunits"/>
    <property type="match status" value="1"/>
</dbReference>
<dbReference type="PROSITE" id="PS00244">
    <property type="entry name" value="REACTION_CENTER"/>
    <property type="match status" value="1"/>
</dbReference>
<protein>
    <recommendedName>
        <fullName>Reaction center protein L chain</fullName>
    </recommendedName>
    <alternativeName>
        <fullName>Photosynthetic reaction center L subunit</fullName>
    </alternativeName>
</protein>
<evidence type="ECO:0000250" key="1"/>
<evidence type="ECO:0000269" key="2">
    <source>
    </source>
</evidence>
<evidence type="ECO:0000305" key="3"/>
<evidence type="ECO:0007829" key="4">
    <source>
        <dbReference type="PDB" id="2WJN"/>
    </source>
</evidence>
<evidence type="ECO:0007829" key="5">
    <source>
        <dbReference type="PDB" id="3PRC"/>
    </source>
</evidence>
<evidence type="ECO:0007829" key="6">
    <source>
        <dbReference type="PDB" id="6PRC"/>
    </source>
</evidence>
<keyword id="KW-0002">3D-structure</keyword>
<keyword id="KW-0076">Bacteriochlorophyll</keyword>
<keyword id="KW-0148">Chlorophyll</keyword>
<keyword id="KW-0157">Chromophore</keyword>
<keyword id="KW-0249">Electron transport</keyword>
<keyword id="KW-0408">Iron</keyword>
<keyword id="KW-0460">Magnesium</keyword>
<keyword id="KW-0472">Membrane</keyword>
<keyword id="KW-0479">Metal-binding</keyword>
<keyword id="KW-0602">Photosynthesis</keyword>
<keyword id="KW-0674">Reaction center</keyword>
<keyword id="KW-0812">Transmembrane</keyword>
<keyword id="KW-1133">Transmembrane helix</keyword>
<keyword id="KW-0813">Transport</keyword>
<sequence length="274" mass="30578">MALLSFERKYRVRGGTLIGGDLFDFWVGPYFVGFFGVSAIFFIFLGVSLIGYAASQGPTWDPFAISINPPDLKYGLGAAPLLEGGFWQAITVCALGAFISWMLREVEISRKLGIGWHVPLAFCVPIFMFCVLQVFRPLLLGSWGHAFPYGILSHLDWVNNFGYQYLNWHYNPGHMSSVSFLFVNAMALGLHGGLILSVANPGDGDKVKTAEHENQYFRDVVGYSIGALSIHRLGLFLASNIFLTGAFGTIASGPFWTRGWPEWWGWWLDIPFWS</sequence>
<name>RCEL_BLAVI</name>
<gene>
    <name type="primary">pufL</name>
</gene>
<feature type="initiator methionine" description="Removed">
    <location>
        <position position="1"/>
    </location>
</feature>
<feature type="chain" id="PRO_0000090410" description="Reaction center protein L chain">
    <location>
        <begin position="2"/>
        <end position="274"/>
    </location>
</feature>
<feature type="topological domain" description="Cytoplasmic" evidence="2">
    <location>
        <begin position="2"/>
        <end position="32"/>
    </location>
</feature>
<feature type="transmembrane region" description="Helical">
    <location>
        <begin position="33"/>
        <end position="53"/>
    </location>
</feature>
<feature type="topological domain" description="Periplasmic" evidence="2">
    <location>
        <begin position="54"/>
        <end position="83"/>
    </location>
</feature>
<feature type="transmembrane region" description="Helical">
    <location>
        <begin position="84"/>
        <end position="111"/>
    </location>
</feature>
<feature type="topological domain" description="Cytoplasmic" evidence="2">
    <location>
        <begin position="112"/>
        <end position="115"/>
    </location>
</feature>
<feature type="transmembrane region" description="Helical">
    <location>
        <begin position="116"/>
        <end position="139"/>
    </location>
</feature>
<feature type="topological domain" description="Periplasmic" evidence="2">
    <location>
        <begin position="140"/>
        <end position="170"/>
    </location>
</feature>
<feature type="transmembrane region" description="Helical">
    <location>
        <begin position="171"/>
        <end position="198"/>
    </location>
</feature>
<feature type="topological domain" description="Cytoplasmic" evidence="2">
    <location>
        <begin position="199"/>
        <end position="225"/>
    </location>
</feature>
<feature type="transmembrane region" description="Helical">
    <location>
        <begin position="226"/>
        <end position="249"/>
    </location>
</feature>
<feature type="topological domain" description="Periplasmic" evidence="2">
    <location>
        <begin position="250"/>
        <end position="274"/>
    </location>
</feature>
<feature type="binding site" description="axial binding residue">
    <location>
        <position position="154"/>
    </location>
    <ligand>
        <name>(7R,8Z)-bacteriochlorophyll b</name>
        <dbReference type="ChEBI" id="CHEBI:30034"/>
    </ligand>
    <ligandPart>
        <name>Mg</name>
        <dbReference type="ChEBI" id="CHEBI:25107"/>
    </ligandPart>
</feature>
<feature type="binding site" description="axial binding residue">
    <location>
        <position position="174"/>
    </location>
    <ligand>
        <name>(7R,8Z)-bacteriochlorophyll b</name>
        <dbReference type="ChEBI" id="CHEBI:30034"/>
    </ligand>
    <ligandPart>
        <name>Mg</name>
        <dbReference type="ChEBI" id="CHEBI:25107"/>
    </ligandPart>
</feature>
<feature type="binding site">
    <location>
        <position position="191"/>
    </location>
    <ligand>
        <name>Fe cation</name>
        <dbReference type="ChEBI" id="CHEBI:24875"/>
    </ligand>
</feature>
<feature type="binding site">
    <location>
        <position position="217"/>
    </location>
    <ligand>
        <name>a ubiquinone</name>
        <dbReference type="ChEBI" id="CHEBI:16389"/>
    </ligand>
</feature>
<feature type="binding site">
    <location>
        <position position="231"/>
    </location>
    <ligand>
        <name>Fe cation</name>
        <dbReference type="ChEBI" id="CHEBI:24875"/>
    </ligand>
</feature>
<feature type="turn" evidence="4">
    <location>
        <begin position="5"/>
        <end position="7"/>
    </location>
</feature>
<feature type="helix" evidence="4">
    <location>
        <begin position="8"/>
        <end position="10"/>
    </location>
</feature>
<feature type="strand" evidence="4">
    <location>
        <begin position="17"/>
        <end position="19"/>
    </location>
</feature>
<feature type="helix" evidence="4">
    <location>
        <begin position="20"/>
        <end position="23"/>
    </location>
</feature>
<feature type="strand" evidence="6">
    <location>
        <begin position="25"/>
        <end position="27"/>
    </location>
</feature>
<feature type="helix" evidence="4">
    <location>
        <begin position="33"/>
        <end position="55"/>
    </location>
</feature>
<feature type="turn" evidence="5">
    <location>
        <begin position="56"/>
        <end position="58"/>
    </location>
</feature>
<feature type="turn" evidence="4">
    <location>
        <begin position="62"/>
        <end position="64"/>
    </location>
</feature>
<feature type="helix" evidence="4">
    <location>
        <begin position="72"/>
        <end position="74"/>
    </location>
</feature>
<feature type="turn" evidence="4">
    <location>
        <begin position="81"/>
        <end position="84"/>
    </location>
</feature>
<feature type="helix" evidence="4">
    <location>
        <begin position="85"/>
        <end position="111"/>
    </location>
</feature>
<feature type="helix" evidence="4">
    <location>
        <begin position="117"/>
        <end position="133"/>
    </location>
</feature>
<feature type="helix" evidence="4">
    <location>
        <begin position="135"/>
        <end position="140"/>
    </location>
</feature>
<feature type="helix" evidence="4">
    <location>
        <begin position="143"/>
        <end position="145"/>
    </location>
</feature>
<feature type="helix" evidence="4">
    <location>
        <begin position="153"/>
        <end position="163"/>
    </location>
</feature>
<feature type="helix" evidence="4">
    <location>
        <begin position="168"/>
        <end position="170"/>
    </location>
</feature>
<feature type="helix" evidence="4">
    <location>
        <begin position="172"/>
        <end position="199"/>
    </location>
</feature>
<feature type="helix" evidence="4">
    <location>
        <begin position="210"/>
        <end position="221"/>
    </location>
</feature>
<feature type="helix" evidence="4">
    <location>
        <begin position="229"/>
        <end position="251"/>
    </location>
</feature>
<feature type="turn" evidence="4">
    <location>
        <begin position="252"/>
        <end position="254"/>
    </location>
</feature>
<feature type="helix" evidence="4">
    <location>
        <begin position="260"/>
        <end position="263"/>
    </location>
</feature>
<feature type="helix" evidence="4">
    <location>
        <begin position="265"/>
        <end position="268"/>
    </location>
</feature>
<feature type="helix" evidence="4">
    <location>
        <begin position="271"/>
        <end position="273"/>
    </location>
</feature>
<comment type="function">
    <text>The reaction center is a membrane-bound complex that mediates the initial photochemical event in the electron transfer process of photosynthesis.</text>
</comment>
<comment type="subunit">
    <text>Reaction center is composed of four bacteriochlorophylls, two bacteriopheophytins, two ubiquinones, one iron, and three highly hydrophobic polypeptide chains (designated L, M, and H).</text>
</comment>
<comment type="subcellular location">
    <subcellularLocation>
        <location evidence="1">Cellular chromatophore membrane</location>
        <topology evidence="1">Multi-pass membrane protein</topology>
    </subcellularLocation>
</comment>
<comment type="similarity">
    <text evidence="3">Belongs to the reaction center PufL/M/PsbA/D family.</text>
</comment>